<organism>
    <name type="scientific">Delftia acidovorans (strain DSM 14801 / SPH-1)</name>
    <dbReference type="NCBI Taxonomy" id="398578"/>
    <lineage>
        <taxon>Bacteria</taxon>
        <taxon>Pseudomonadati</taxon>
        <taxon>Pseudomonadota</taxon>
        <taxon>Betaproteobacteria</taxon>
        <taxon>Burkholderiales</taxon>
        <taxon>Comamonadaceae</taxon>
        <taxon>Delftia</taxon>
    </lineage>
</organism>
<proteinExistence type="inferred from homology"/>
<evidence type="ECO:0000255" key="1">
    <source>
        <dbReference type="HAMAP-Rule" id="MF_00694"/>
    </source>
</evidence>
<keyword id="KW-0456">Lyase</keyword>
<keyword id="KW-1185">Reference proteome</keyword>
<feature type="chain" id="PRO_1000132269" description="Probable 5-dehydro-4-deoxyglucarate dehydratase">
    <location>
        <begin position="1"/>
        <end position="303"/>
    </location>
</feature>
<reference key="1">
    <citation type="submission" date="2007-11" db="EMBL/GenBank/DDBJ databases">
        <title>Complete sequence of Delftia acidovorans DSM 14801 / SPH-1.</title>
        <authorList>
            <person name="Copeland A."/>
            <person name="Lucas S."/>
            <person name="Lapidus A."/>
            <person name="Barry K."/>
            <person name="Glavina del Rio T."/>
            <person name="Dalin E."/>
            <person name="Tice H."/>
            <person name="Pitluck S."/>
            <person name="Lowry S."/>
            <person name="Clum A."/>
            <person name="Schmutz J."/>
            <person name="Larimer F."/>
            <person name="Land M."/>
            <person name="Hauser L."/>
            <person name="Kyrpides N."/>
            <person name="Kim E."/>
            <person name="Schleheck D."/>
            <person name="Richardson P."/>
        </authorList>
    </citation>
    <scope>NUCLEOTIDE SEQUENCE [LARGE SCALE GENOMIC DNA]</scope>
    <source>
        <strain>DSM 14801 / SPH-1</strain>
    </source>
</reference>
<dbReference type="EC" id="4.2.1.41" evidence="1"/>
<dbReference type="EMBL" id="CP000884">
    <property type="protein sequence ID" value="ABX32897.1"/>
    <property type="molecule type" value="Genomic_DNA"/>
</dbReference>
<dbReference type="SMR" id="A9BQU2"/>
<dbReference type="STRING" id="398578.Daci_0251"/>
<dbReference type="GeneID" id="24117872"/>
<dbReference type="KEGG" id="dac:Daci_0251"/>
<dbReference type="eggNOG" id="COG0329">
    <property type="taxonomic scope" value="Bacteria"/>
</dbReference>
<dbReference type="HOGENOM" id="CLU_049343_5_2_4"/>
<dbReference type="UniPathway" id="UPA00564">
    <property type="reaction ID" value="UER00628"/>
</dbReference>
<dbReference type="Proteomes" id="UP000000784">
    <property type="component" value="Chromosome"/>
</dbReference>
<dbReference type="GO" id="GO:0008840">
    <property type="term" value="F:4-hydroxy-tetrahydrodipicolinate synthase activity"/>
    <property type="evidence" value="ECO:0007669"/>
    <property type="project" value="TreeGrafter"/>
</dbReference>
<dbReference type="GO" id="GO:0047448">
    <property type="term" value="F:5-dehydro-4-deoxyglucarate dehydratase activity"/>
    <property type="evidence" value="ECO:0007669"/>
    <property type="project" value="UniProtKB-UniRule"/>
</dbReference>
<dbReference type="GO" id="GO:0042838">
    <property type="term" value="P:D-glucarate catabolic process"/>
    <property type="evidence" value="ECO:0007669"/>
    <property type="project" value="UniProtKB-UniRule"/>
</dbReference>
<dbReference type="CDD" id="cd00951">
    <property type="entry name" value="KDGDH"/>
    <property type="match status" value="1"/>
</dbReference>
<dbReference type="Gene3D" id="3.20.20.70">
    <property type="entry name" value="Aldolase class I"/>
    <property type="match status" value="1"/>
</dbReference>
<dbReference type="HAMAP" id="MF_00694">
    <property type="entry name" value="KDGDH"/>
    <property type="match status" value="1"/>
</dbReference>
<dbReference type="InterPro" id="IPR013785">
    <property type="entry name" value="Aldolase_TIM"/>
</dbReference>
<dbReference type="InterPro" id="IPR002220">
    <property type="entry name" value="DapA-like"/>
</dbReference>
<dbReference type="InterPro" id="IPR017655">
    <property type="entry name" value="Dehydro-deoxyglucarate_dehyd"/>
</dbReference>
<dbReference type="NCBIfam" id="TIGR03249">
    <property type="entry name" value="KdgD"/>
    <property type="match status" value="1"/>
</dbReference>
<dbReference type="NCBIfam" id="NF002958">
    <property type="entry name" value="PRK03620.1"/>
    <property type="match status" value="1"/>
</dbReference>
<dbReference type="PANTHER" id="PTHR12128:SF19">
    <property type="entry name" value="5-DEHYDRO-4-DEOXYGLUCARATE DEHYDRATASE 2-RELATED"/>
    <property type="match status" value="1"/>
</dbReference>
<dbReference type="PANTHER" id="PTHR12128">
    <property type="entry name" value="DIHYDRODIPICOLINATE SYNTHASE"/>
    <property type="match status" value="1"/>
</dbReference>
<dbReference type="Pfam" id="PF00701">
    <property type="entry name" value="DHDPS"/>
    <property type="match status" value="1"/>
</dbReference>
<dbReference type="PIRSF" id="PIRSF001365">
    <property type="entry name" value="DHDPS"/>
    <property type="match status" value="1"/>
</dbReference>
<dbReference type="PRINTS" id="PR00146">
    <property type="entry name" value="DHPICSNTHASE"/>
</dbReference>
<dbReference type="SMART" id="SM01130">
    <property type="entry name" value="DHDPS"/>
    <property type="match status" value="1"/>
</dbReference>
<dbReference type="SUPFAM" id="SSF51569">
    <property type="entry name" value="Aldolase"/>
    <property type="match status" value="1"/>
</dbReference>
<sequence length="303" mass="32772">MTPQDLKDVMSSGLLSFPVTDFDSNGNFNAKGYAARLEWLAPYGASALFAAGGTGEYFSLYGEEYGQIIKTAVDTCRGKVPIIAGAGGPTRTAIAHAQEAERLGAHGVLLLPHYLTEAGQEGLIAHVEQVCKSVKFGVIVYNRDRTRFTPESLAILAERCPNLVGFKDGMGNIETMSAIFMKMGDRFAYLGGLPTAEVYAAAYKALGTPVYSSAVFNFIPKTAMAFYEAVRTDDMATQHKLLKEFFMPYLKIRNRVEGYGVSIIKAGAKLVGHDAGPVRAPLTDLKPSELEELKALIDKLGPQ</sequence>
<accession>A9BQU2</accession>
<name>KDGD_DELAS</name>
<protein>
    <recommendedName>
        <fullName evidence="1">Probable 5-dehydro-4-deoxyglucarate dehydratase</fullName>
        <ecNumber evidence="1">4.2.1.41</ecNumber>
    </recommendedName>
    <alternativeName>
        <fullName evidence="1">5-keto-4-deoxy-glucarate dehydratase</fullName>
        <shortName evidence="1">KDGDH</shortName>
    </alternativeName>
</protein>
<gene>
    <name type="ordered locus">Daci_0251</name>
</gene>
<comment type="catalytic activity">
    <reaction evidence="1">
        <text>5-dehydro-4-deoxy-D-glucarate + H(+) = 2,5-dioxopentanoate + CO2 + H2O</text>
        <dbReference type="Rhea" id="RHEA:24608"/>
        <dbReference type="ChEBI" id="CHEBI:15377"/>
        <dbReference type="ChEBI" id="CHEBI:15378"/>
        <dbReference type="ChEBI" id="CHEBI:16526"/>
        <dbReference type="ChEBI" id="CHEBI:42819"/>
        <dbReference type="ChEBI" id="CHEBI:58136"/>
        <dbReference type="EC" id="4.2.1.41"/>
    </reaction>
</comment>
<comment type="pathway">
    <text evidence="1">Carbohydrate acid metabolism; D-glucarate degradation; 2,5-dioxopentanoate from D-glucarate: step 2/2.</text>
</comment>
<comment type="similarity">
    <text evidence="1">Belongs to the DapA family.</text>
</comment>